<gene>
    <name type="primary">Ubx</name>
</gene>
<evidence type="ECO:0000250" key="1"/>
<evidence type="ECO:0000255" key="2">
    <source>
        <dbReference type="PROSITE-ProRule" id="PRU00108"/>
    </source>
</evidence>
<evidence type="ECO:0000256" key="3">
    <source>
        <dbReference type="SAM" id="MobiDB-lite"/>
    </source>
</evidence>
<evidence type="ECO:0000305" key="4"/>
<keyword id="KW-0010">Activator</keyword>
<keyword id="KW-0217">Developmental protein</keyword>
<keyword id="KW-0238">DNA-binding</keyword>
<keyword id="KW-0371">Homeobox</keyword>
<keyword id="KW-0539">Nucleus</keyword>
<keyword id="KW-0678">Repressor</keyword>
<keyword id="KW-0804">Transcription</keyword>
<keyword id="KW-0805">Transcription regulation</keyword>
<reference key="1">
    <citation type="journal article" date="1998" name="Nature">
        <title>A role of Ultrabithorax in morphological differences between Drosophila species.</title>
        <authorList>
            <person name="Stern D.L."/>
        </authorList>
    </citation>
    <scope>NUCLEOTIDE SEQUENCE [GENOMIC DNA]</scope>
    <source>
        <strain>Tsimbazaza</strain>
    </source>
</reference>
<dbReference type="EMBL" id="AF099983">
    <property type="protein sequence ID" value="AAD16402.1"/>
    <property type="molecule type" value="Genomic_DNA"/>
</dbReference>
<dbReference type="EMBL" id="AF099980">
    <property type="protein sequence ID" value="AAD16402.1"/>
    <property type="status" value="JOINED"/>
    <property type="molecule type" value="Genomic_DNA"/>
</dbReference>
<dbReference type="EMBL" id="AF099981">
    <property type="protein sequence ID" value="AAD16402.1"/>
    <property type="status" value="JOINED"/>
    <property type="molecule type" value="Genomic_DNA"/>
</dbReference>
<dbReference type="EMBL" id="AF099982">
    <property type="protein sequence ID" value="AAD16402.1"/>
    <property type="status" value="JOINED"/>
    <property type="molecule type" value="Genomic_DNA"/>
</dbReference>
<dbReference type="SMR" id="P83950"/>
<dbReference type="EnsemblMetazoa" id="XM_039294541.2">
    <property type="protein sequence ID" value="XP_039150475.1"/>
    <property type="gene ID" value="LOC6727783"/>
</dbReference>
<dbReference type="OrthoDB" id="6159439at2759"/>
<dbReference type="ChiTaRS" id="Ubx">
    <property type="organism name" value="fly"/>
</dbReference>
<dbReference type="GO" id="GO:0005634">
    <property type="term" value="C:nucleus"/>
    <property type="evidence" value="ECO:0000250"/>
    <property type="project" value="UniProtKB"/>
</dbReference>
<dbReference type="GO" id="GO:0005704">
    <property type="term" value="C:polytene chromosome band"/>
    <property type="evidence" value="ECO:0007669"/>
    <property type="project" value="EnsemblMetazoa"/>
</dbReference>
<dbReference type="GO" id="GO:0032993">
    <property type="term" value="C:protein-DNA complex"/>
    <property type="evidence" value="ECO:0007669"/>
    <property type="project" value="EnsemblMetazoa"/>
</dbReference>
<dbReference type="GO" id="GO:0017053">
    <property type="term" value="C:transcription repressor complex"/>
    <property type="evidence" value="ECO:0007669"/>
    <property type="project" value="EnsemblMetazoa"/>
</dbReference>
<dbReference type="GO" id="GO:0003677">
    <property type="term" value="F:DNA binding"/>
    <property type="evidence" value="ECO:0000250"/>
    <property type="project" value="UniProtKB"/>
</dbReference>
<dbReference type="GO" id="GO:0000981">
    <property type="term" value="F:DNA-binding transcription factor activity, RNA polymerase II-specific"/>
    <property type="evidence" value="ECO:0007669"/>
    <property type="project" value="InterPro"/>
</dbReference>
<dbReference type="GO" id="GO:0019904">
    <property type="term" value="F:protein domain specific binding"/>
    <property type="evidence" value="ECO:0007669"/>
    <property type="project" value="EnsemblMetazoa"/>
</dbReference>
<dbReference type="GO" id="GO:0000978">
    <property type="term" value="F:RNA polymerase II cis-regulatory region sequence-specific DNA binding"/>
    <property type="evidence" value="ECO:0007669"/>
    <property type="project" value="EnsemblMetazoa"/>
</dbReference>
<dbReference type="GO" id="GO:0001221">
    <property type="term" value="F:transcription coregulator binding"/>
    <property type="evidence" value="ECO:0007669"/>
    <property type="project" value="EnsemblMetazoa"/>
</dbReference>
<dbReference type="GO" id="GO:0061327">
    <property type="term" value="P:anterior Malpighian tubule development"/>
    <property type="evidence" value="ECO:0007669"/>
    <property type="project" value="EnsemblMetazoa"/>
</dbReference>
<dbReference type="GO" id="GO:0009952">
    <property type="term" value="P:anterior/posterior pattern specification"/>
    <property type="evidence" value="ECO:0007669"/>
    <property type="project" value="TreeGrafter"/>
</dbReference>
<dbReference type="GO" id="GO:0001709">
    <property type="term" value="P:cell fate determination"/>
    <property type="evidence" value="ECO:0007669"/>
    <property type="project" value="EnsemblMetazoa"/>
</dbReference>
<dbReference type="GO" id="GO:0007482">
    <property type="term" value="P:haltere development"/>
    <property type="evidence" value="ECO:0007669"/>
    <property type="project" value="EnsemblMetazoa"/>
</dbReference>
<dbReference type="GO" id="GO:0007507">
    <property type="term" value="P:heart development"/>
    <property type="evidence" value="ECO:0007669"/>
    <property type="project" value="EnsemblMetazoa"/>
</dbReference>
<dbReference type="GO" id="GO:0007480">
    <property type="term" value="P:imaginal disc-derived leg morphogenesis"/>
    <property type="evidence" value="ECO:0007669"/>
    <property type="project" value="EnsemblMetazoa"/>
</dbReference>
<dbReference type="GO" id="GO:0007501">
    <property type="term" value="P:mesodermal cell fate specification"/>
    <property type="evidence" value="ECO:0007669"/>
    <property type="project" value="EnsemblMetazoa"/>
</dbReference>
<dbReference type="GO" id="GO:0042694">
    <property type="term" value="P:muscle cell fate specification"/>
    <property type="evidence" value="ECO:0007669"/>
    <property type="project" value="EnsemblMetazoa"/>
</dbReference>
<dbReference type="GO" id="GO:0000122">
    <property type="term" value="P:negative regulation of transcription by RNA polymerase II"/>
    <property type="evidence" value="ECO:0007669"/>
    <property type="project" value="EnsemblMetazoa"/>
</dbReference>
<dbReference type="GO" id="GO:0007424">
    <property type="term" value="P:open tracheal system development"/>
    <property type="evidence" value="ECO:0007669"/>
    <property type="project" value="EnsemblMetazoa"/>
</dbReference>
<dbReference type="GO" id="GO:0045893">
    <property type="term" value="P:positive regulation of DNA-templated transcription"/>
    <property type="evidence" value="ECO:0007669"/>
    <property type="project" value="EnsemblMetazoa"/>
</dbReference>
<dbReference type="GO" id="GO:0048636">
    <property type="term" value="P:positive regulation of muscle organ development"/>
    <property type="evidence" value="ECO:0007669"/>
    <property type="project" value="EnsemblMetazoa"/>
</dbReference>
<dbReference type="GO" id="GO:0042659">
    <property type="term" value="P:regulation of cell fate specification"/>
    <property type="evidence" value="ECO:0007669"/>
    <property type="project" value="EnsemblMetazoa"/>
</dbReference>
<dbReference type="GO" id="GO:0006355">
    <property type="term" value="P:regulation of DNA-templated transcription"/>
    <property type="evidence" value="ECO:0000250"/>
    <property type="project" value="UniProtKB"/>
</dbReference>
<dbReference type="GO" id="GO:0045570">
    <property type="term" value="P:regulation of imaginal disc growth"/>
    <property type="evidence" value="ECO:0007669"/>
    <property type="project" value="EnsemblMetazoa"/>
</dbReference>
<dbReference type="GO" id="GO:0007525">
    <property type="term" value="P:somatic muscle development"/>
    <property type="evidence" value="ECO:0007669"/>
    <property type="project" value="EnsemblMetazoa"/>
</dbReference>
<dbReference type="GO" id="GO:0010092">
    <property type="term" value="P:specification of animal organ identity"/>
    <property type="evidence" value="ECO:0007669"/>
    <property type="project" value="EnsemblMetazoa"/>
</dbReference>
<dbReference type="GO" id="GO:0007384">
    <property type="term" value="P:specification of segmental identity, thorax"/>
    <property type="evidence" value="ECO:0007669"/>
    <property type="project" value="EnsemblMetazoa"/>
</dbReference>
<dbReference type="CDD" id="cd00086">
    <property type="entry name" value="homeodomain"/>
    <property type="match status" value="1"/>
</dbReference>
<dbReference type="Gene3D" id="1.10.10.60">
    <property type="entry name" value="Homeodomain-like"/>
    <property type="match status" value="1"/>
</dbReference>
<dbReference type="InterPro" id="IPR050296">
    <property type="entry name" value="Antp_homeobox"/>
</dbReference>
<dbReference type="InterPro" id="IPR001356">
    <property type="entry name" value="HD"/>
</dbReference>
<dbReference type="InterPro" id="IPR020479">
    <property type="entry name" value="HD_metazoa"/>
</dbReference>
<dbReference type="InterPro" id="IPR001827">
    <property type="entry name" value="Homeobox_Antennapedia_CS"/>
</dbReference>
<dbReference type="InterPro" id="IPR017970">
    <property type="entry name" value="Homeobox_CS"/>
</dbReference>
<dbReference type="InterPro" id="IPR009057">
    <property type="entry name" value="Homeodomain-like_sf"/>
</dbReference>
<dbReference type="PANTHER" id="PTHR45659">
    <property type="entry name" value="HOMEOBOX PROTEIN HOX"/>
    <property type="match status" value="1"/>
</dbReference>
<dbReference type="PANTHER" id="PTHR45659:SF21">
    <property type="entry name" value="HOMEOTIC PROTEIN ULTRABITHORAX"/>
    <property type="match status" value="1"/>
</dbReference>
<dbReference type="Pfam" id="PF00046">
    <property type="entry name" value="Homeodomain"/>
    <property type="match status" value="1"/>
</dbReference>
<dbReference type="PRINTS" id="PR00024">
    <property type="entry name" value="HOMEOBOX"/>
</dbReference>
<dbReference type="SMART" id="SM00389">
    <property type="entry name" value="HOX"/>
    <property type="match status" value="1"/>
</dbReference>
<dbReference type="SUPFAM" id="SSF46689">
    <property type="entry name" value="Homeodomain-like"/>
    <property type="match status" value="1"/>
</dbReference>
<dbReference type="PROSITE" id="PS00032">
    <property type="entry name" value="ANTENNAPEDIA"/>
    <property type="match status" value="1"/>
</dbReference>
<dbReference type="PROSITE" id="PS00027">
    <property type="entry name" value="HOMEOBOX_1"/>
    <property type="match status" value="1"/>
</dbReference>
<dbReference type="PROSITE" id="PS50071">
    <property type="entry name" value="HOMEOBOX_2"/>
    <property type="match status" value="1"/>
</dbReference>
<protein>
    <recommendedName>
        <fullName>Homeotic protein ultrabithorax</fullName>
    </recommendedName>
</protein>
<accession>P83950</accession>
<accession>P02834</accession>
<accession>Q9TX83</accession>
<accession>Q9VER4</accession>
<accession>Q9VER5</accession>
<proteinExistence type="inferred from homology"/>
<comment type="function">
    <text>Sequence-specific transcription factor which is part of a developmental regulatory system that provides cells with specific positional identities on the anterior-posterior axis. Binds the consensus region 5'-TTAAT[GT][GA]-3'. This homeotic protein controls development of the cells in the posterior thoracic and first abdominal segments. It activates the synthesis of the decapentaplegic (DPP) growth factor.</text>
</comment>
<comment type="subcellular location">
    <subcellularLocation>
        <location>Nucleus</location>
    </subcellularLocation>
</comment>
<comment type="domain">
    <text evidence="1">The QA motif is able to mediate transcriptional repression.</text>
</comment>
<comment type="similarity">
    <text evidence="4">Belongs to the Antp homeobox family.</text>
</comment>
<feature type="chain" id="PRO_0000200270" description="Homeotic protein ultrabithorax">
    <location>
        <begin position="1"/>
        <end position="389"/>
    </location>
</feature>
<feature type="DNA-binding region" description="Homeobox" evidence="2">
    <location>
        <begin position="295"/>
        <end position="354"/>
    </location>
</feature>
<feature type="region of interest" description="Disordered" evidence="3">
    <location>
        <begin position="138"/>
        <end position="189"/>
    </location>
</feature>
<feature type="short sequence motif" description="Antp-type hexapeptide">
    <location>
        <begin position="239"/>
        <end position="244"/>
    </location>
</feature>
<feature type="short sequence motif" description="QA">
    <location>
        <begin position="368"/>
        <end position="383"/>
    </location>
</feature>
<feature type="compositionally biased region" description="Low complexity" evidence="3">
    <location>
        <begin position="138"/>
        <end position="150"/>
    </location>
</feature>
<sequence>MNSYFEQASGFYGHPHQATGMAMGSGGHHDQTASAAAAAYRGFPLSLGMSPYANHHLQRTTQDSPYDASITAACNKIYGDGAGAYKQDCLNIKADAVNGYKDIWNTGGSNGGGGGGGGGGGGGAGGTGGAGNANGGNAANANGQNNPAGGMPVRPSACTPDSRVGGYLDTSGGSPVSHRGGSAGGNVSVSGGNGNAGGVQSGVGVAGAGTAWNANCTISGAAAQTAAASSLHQASNHTFYPWMAIAGECPEDPTKSKIRSDLTQYGGISTDMGKRYSESLAGSLLPDWLGTNGLRRRGRQTYTRYQTLELEKEFHTNHYLTRRRRIEMAHALCLTERQIKIWFQNRRMKLKKEIQAIKELNEQEKQAQAQKAAAAAAAAAAVQGGHLDQ</sequence>
<organism>
    <name type="scientific">Drosophila simulans</name>
    <name type="common">Fruit fly</name>
    <dbReference type="NCBI Taxonomy" id="7240"/>
    <lineage>
        <taxon>Eukaryota</taxon>
        <taxon>Metazoa</taxon>
        <taxon>Ecdysozoa</taxon>
        <taxon>Arthropoda</taxon>
        <taxon>Hexapoda</taxon>
        <taxon>Insecta</taxon>
        <taxon>Pterygota</taxon>
        <taxon>Neoptera</taxon>
        <taxon>Endopterygota</taxon>
        <taxon>Diptera</taxon>
        <taxon>Brachycera</taxon>
        <taxon>Muscomorpha</taxon>
        <taxon>Ephydroidea</taxon>
        <taxon>Drosophilidae</taxon>
        <taxon>Drosophila</taxon>
        <taxon>Sophophora</taxon>
    </lineage>
</organism>
<name>UBX_DROSI</name>